<protein>
    <recommendedName>
        <fullName evidence="1">Urease accessory protein UreE</fullName>
    </recommendedName>
</protein>
<proteinExistence type="evidence at protein level"/>
<gene>
    <name evidence="1" type="primary">ureE</name>
    <name type="ordered locus">SA2085</name>
</gene>
<sequence>MIVEEIQGNIANLSNSEKQKHVEKVYLENSDLVKRIQRVVTDHGTEIGIRLKQPIDLQYGDILYADDHNMIIVDVNSEDLLVIQPRTLQEMGDIAHQLGNRHLPAQFTETEMLVQYDYLVEDLLKSLGIPYVREDRKVNKAFRHIGHSHD</sequence>
<accession>Q7A429</accession>
<dbReference type="EMBL" id="BA000018">
    <property type="protein sequence ID" value="BAB43383.1"/>
    <property type="molecule type" value="Genomic_DNA"/>
</dbReference>
<dbReference type="PIR" id="F90027">
    <property type="entry name" value="F90027"/>
</dbReference>
<dbReference type="RefSeq" id="WP_000634589.1">
    <property type="nucleotide sequence ID" value="NC_002745.2"/>
</dbReference>
<dbReference type="SMR" id="Q7A429"/>
<dbReference type="EnsemblBacteria" id="BAB43383">
    <property type="protein sequence ID" value="BAB43383"/>
    <property type="gene ID" value="BAB43383"/>
</dbReference>
<dbReference type="KEGG" id="sau:SA2085"/>
<dbReference type="HOGENOM" id="CLU_093757_3_1_9"/>
<dbReference type="GO" id="GO:0005737">
    <property type="term" value="C:cytoplasm"/>
    <property type="evidence" value="ECO:0007669"/>
    <property type="project" value="UniProtKB-SubCell"/>
</dbReference>
<dbReference type="GO" id="GO:0016151">
    <property type="term" value="F:nickel cation binding"/>
    <property type="evidence" value="ECO:0007669"/>
    <property type="project" value="UniProtKB-UniRule"/>
</dbReference>
<dbReference type="GO" id="GO:0051082">
    <property type="term" value="F:unfolded protein binding"/>
    <property type="evidence" value="ECO:0007669"/>
    <property type="project" value="UniProtKB-UniRule"/>
</dbReference>
<dbReference type="GO" id="GO:0006457">
    <property type="term" value="P:protein folding"/>
    <property type="evidence" value="ECO:0007669"/>
    <property type="project" value="InterPro"/>
</dbReference>
<dbReference type="GO" id="GO:0065003">
    <property type="term" value="P:protein-containing complex assembly"/>
    <property type="evidence" value="ECO:0007669"/>
    <property type="project" value="InterPro"/>
</dbReference>
<dbReference type="GO" id="GO:0019627">
    <property type="term" value="P:urea metabolic process"/>
    <property type="evidence" value="ECO:0007669"/>
    <property type="project" value="InterPro"/>
</dbReference>
<dbReference type="CDD" id="cd00571">
    <property type="entry name" value="UreE"/>
    <property type="match status" value="1"/>
</dbReference>
<dbReference type="Gene3D" id="2.60.260.20">
    <property type="entry name" value="Urease metallochaperone UreE, N-terminal domain"/>
    <property type="match status" value="1"/>
</dbReference>
<dbReference type="Gene3D" id="3.30.70.790">
    <property type="entry name" value="UreE, C-terminal domain"/>
    <property type="match status" value="1"/>
</dbReference>
<dbReference type="HAMAP" id="MF_00822">
    <property type="entry name" value="UreE"/>
    <property type="match status" value="1"/>
</dbReference>
<dbReference type="InterPro" id="IPR012406">
    <property type="entry name" value="UreE"/>
</dbReference>
<dbReference type="InterPro" id="IPR007864">
    <property type="entry name" value="UreE_C_dom"/>
</dbReference>
<dbReference type="InterPro" id="IPR004029">
    <property type="entry name" value="UreE_N"/>
</dbReference>
<dbReference type="InterPro" id="IPR036118">
    <property type="entry name" value="UreE_N_sf"/>
</dbReference>
<dbReference type="NCBIfam" id="NF009755">
    <property type="entry name" value="PRK13261.2-1"/>
    <property type="match status" value="1"/>
</dbReference>
<dbReference type="Pfam" id="PF05194">
    <property type="entry name" value="UreE_C"/>
    <property type="match status" value="1"/>
</dbReference>
<dbReference type="Pfam" id="PF02814">
    <property type="entry name" value="UreE_N"/>
    <property type="match status" value="1"/>
</dbReference>
<dbReference type="PIRSF" id="PIRSF036402">
    <property type="entry name" value="Ureas_acces_UreE"/>
    <property type="match status" value="1"/>
</dbReference>
<dbReference type="SMART" id="SM00988">
    <property type="entry name" value="UreE_N"/>
    <property type="match status" value="1"/>
</dbReference>
<dbReference type="SUPFAM" id="SSF69737">
    <property type="entry name" value="Urease metallochaperone UreE, C-terminal domain"/>
    <property type="match status" value="1"/>
</dbReference>
<dbReference type="SUPFAM" id="SSF69287">
    <property type="entry name" value="Urease metallochaperone UreE, N-terminal domain"/>
    <property type="match status" value="1"/>
</dbReference>
<keyword id="KW-0143">Chaperone</keyword>
<keyword id="KW-0963">Cytoplasm</keyword>
<keyword id="KW-0533">Nickel</keyword>
<keyword id="KW-0996">Nickel insertion</keyword>
<comment type="function">
    <text evidence="1">Involved in urease metallocenter assembly. Binds nickel. Probably functions as a nickel donor during metallocenter assembly.</text>
</comment>
<comment type="subcellular location">
    <subcellularLocation>
        <location evidence="1">Cytoplasm</location>
    </subcellularLocation>
</comment>
<comment type="similarity">
    <text evidence="1">Belongs to the UreE family.</text>
</comment>
<feature type="chain" id="PRO_0000223442" description="Urease accessory protein UreE">
    <location>
        <begin position="1"/>
        <end position="150"/>
    </location>
</feature>
<name>UREE_STAAN</name>
<organism>
    <name type="scientific">Staphylococcus aureus (strain N315)</name>
    <dbReference type="NCBI Taxonomy" id="158879"/>
    <lineage>
        <taxon>Bacteria</taxon>
        <taxon>Bacillati</taxon>
        <taxon>Bacillota</taxon>
        <taxon>Bacilli</taxon>
        <taxon>Bacillales</taxon>
        <taxon>Staphylococcaceae</taxon>
        <taxon>Staphylococcus</taxon>
    </lineage>
</organism>
<evidence type="ECO:0000255" key="1">
    <source>
        <dbReference type="HAMAP-Rule" id="MF_00822"/>
    </source>
</evidence>
<reference key="1">
    <citation type="journal article" date="2001" name="Lancet">
        <title>Whole genome sequencing of meticillin-resistant Staphylococcus aureus.</title>
        <authorList>
            <person name="Kuroda M."/>
            <person name="Ohta T."/>
            <person name="Uchiyama I."/>
            <person name="Baba T."/>
            <person name="Yuzawa H."/>
            <person name="Kobayashi I."/>
            <person name="Cui L."/>
            <person name="Oguchi A."/>
            <person name="Aoki K."/>
            <person name="Nagai Y."/>
            <person name="Lian J.-Q."/>
            <person name="Ito T."/>
            <person name="Kanamori M."/>
            <person name="Matsumaru H."/>
            <person name="Maruyama A."/>
            <person name="Murakami H."/>
            <person name="Hosoyama A."/>
            <person name="Mizutani-Ui Y."/>
            <person name="Takahashi N.K."/>
            <person name="Sawano T."/>
            <person name="Inoue R."/>
            <person name="Kaito C."/>
            <person name="Sekimizu K."/>
            <person name="Hirakawa H."/>
            <person name="Kuhara S."/>
            <person name="Goto S."/>
            <person name="Yabuzaki J."/>
            <person name="Kanehisa M."/>
            <person name="Yamashita A."/>
            <person name="Oshima K."/>
            <person name="Furuya K."/>
            <person name="Yoshino C."/>
            <person name="Shiba T."/>
            <person name="Hattori M."/>
            <person name="Ogasawara N."/>
            <person name="Hayashi H."/>
            <person name="Hiramatsu K."/>
        </authorList>
    </citation>
    <scope>NUCLEOTIDE SEQUENCE [LARGE SCALE GENOMIC DNA]</scope>
    <source>
        <strain>N315</strain>
    </source>
</reference>
<reference key="2">
    <citation type="submission" date="2007-10" db="UniProtKB">
        <title>Shotgun proteomic analysis of total and membrane protein extracts of S. aureus strain N315.</title>
        <authorList>
            <person name="Vaezzadeh A.R."/>
            <person name="Deshusses J."/>
            <person name="Lescuyer P."/>
            <person name="Hochstrasser D.F."/>
        </authorList>
    </citation>
    <scope>IDENTIFICATION BY MASS SPECTROMETRY [LARGE SCALE ANALYSIS]</scope>
    <source>
        <strain>N315</strain>
    </source>
</reference>